<proteinExistence type="inferred from homology"/>
<name>HIS7_MYCSJ</name>
<dbReference type="EC" id="4.2.1.19" evidence="1"/>
<dbReference type="EMBL" id="CP000580">
    <property type="protein sequence ID" value="ABN98856.1"/>
    <property type="molecule type" value="Genomic_DNA"/>
</dbReference>
<dbReference type="SMR" id="A3Q129"/>
<dbReference type="KEGG" id="mjl:Mjls_3077"/>
<dbReference type="HOGENOM" id="CLU_044308_3_0_11"/>
<dbReference type="BioCyc" id="MSP164757:G1G8C-3102-MONOMER"/>
<dbReference type="UniPathway" id="UPA00031">
    <property type="reaction ID" value="UER00011"/>
</dbReference>
<dbReference type="GO" id="GO:0005737">
    <property type="term" value="C:cytoplasm"/>
    <property type="evidence" value="ECO:0007669"/>
    <property type="project" value="UniProtKB-SubCell"/>
</dbReference>
<dbReference type="GO" id="GO:0004424">
    <property type="term" value="F:imidazoleglycerol-phosphate dehydratase activity"/>
    <property type="evidence" value="ECO:0007669"/>
    <property type="project" value="UniProtKB-UniRule"/>
</dbReference>
<dbReference type="GO" id="GO:0000105">
    <property type="term" value="P:L-histidine biosynthetic process"/>
    <property type="evidence" value="ECO:0007669"/>
    <property type="project" value="UniProtKB-UniRule"/>
</dbReference>
<dbReference type="CDD" id="cd07914">
    <property type="entry name" value="IGPD"/>
    <property type="match status" value="1"/>
</dbReference>
<dbReference type="FunFam" id="3.30.230.40:FF:000001">
    <property type="entry name" value="Imidazoleglycerol-phosphate dehydratase HisB"/>
    <property type="match status" value="1"/>
</dbReference>
<dbReference type="FunFam" id="3.30.230.40:FF:000003">
    <property type="entry name" value="Imidazoleglycerol-phosphate dehydratase HisB"/>
    <property type="match status" value="1"/>
</dbReference>
<dbReference type="Gene3D" id="3.30.230.40">
    <property type="entry name" value="Imidazole glycerol phosphate dehydratase, domain 1"/>
    <property type="match status" value="2"/>
</dbReference>
<dbReference type="HAMAP" id="MF_00076">
    <property type="entry name" value="HisB"/>
    <property type="match status" value="1"/>
</dbReference>
<dbReference type="InterPro" id="IPR038494">
    <property type="entry name" value="IGPD_sf"/>
</dbReference>
<dbReference type="InterPro" id="IPR000807">
    <property type="entry name" value="ImidazoleglycerolP_deHydtase"/>
</dbReference>
<dbReference type="InterPro" id="IPR020565">
    <property type="entry name" value="ImidazoleglycerP_deHydtase_CS"/>
</dbReference>
<dbReference type="InterPro" id="IPR020568">
    <property type="entry name" value="Ribosomal_Su5_D2-typ_SF"/>
</dbReference>
<dbReference type="NCBIfam" id="NF002110">
    <property type="entry name" value="PRK00951.1-6"/>
    <property type="match status" value="1"/>
</dbReference>
<dbReference type="NCBIfam" id="NF002111">
    <property type="entry name" value="PRK00951.2-1"/>
    <property type="match status" value="1"/>
</dbReference>
<dbReference type="NCBIfam" id="NF002114">
    <property type="entry name" value="PRK00951.2-4"/>
    <property type="match status" value="1"/>
</dbReference>
<dbReference type="PANTHER" id="PTHR23133:SF2">
    <property type="entry name" value="IMIDAZOLEGLYCEROL-PHOSPHATE DEHYDRATASE"/>
    <property type="match status" value="1"/>
</dbReference>
<dbReference type="PANTHER" id="PTHR23133">
    <property type="entry name" value="IMIDAZOLEGLYCEROL-PHOSPHATE DEHYDRATASE HIS7"/>
    <property type="match status" value="1"/>
</dbReference>
<dbReference type="Pfam" id="PF00475">
    <property type="entry name" value="IGPD"/>
    <property type="match status" value="1"/>
</dbReference>
<dbReference type="SUPFAM" id="SSF54211">
    <property type="entry name" value="Ribosomal protein S5 domain 2-like"/>
    <property type="match status" value="2"/>
</dbReference>
<dbReference type="PROSITE" id="PS00954">
    <property type="entry name" value="IGP_DEHYDRATASE_1"/>
    <property type="match status" value="1"/>
</dbReference>
<dbReference type="PROSITE" id="PS00955">
    <property type="entry name" value="IGP_DEHYDRATASE_2"/>
    <property type="match status" value="1"/>
</dbReference>
<feature type="chain" id="PRO_1000010302" description="Imidazoleglycerol-phosphate dehydratase">
    <location>
        <begin position="1"/>
        <end position="208"/>
    </location>
</feature>
<comment type="catalytic activity">
    <reaction evidence="1">
        <text>D-erythro-1-(imidazol-4-yl)glycerol 3-phosphate = 3-(imidazol-4-yl)-2-oxopropyl phosphate + H2O</text>
        <dbReference type="Rhea" id="RHEA:11040"/>
        <dbReference type="ChEBI" id="CHEBI:15377"/>
        <dbReference type="ChEBI" id="CHEBI:57766"/>
        <dbReference type="ChEBI" id="CHEBI:58278"/>
        <dbReference type="EC" id="4.2.1.19"/>
    </reaction>
</comment>
<comment type="pathway">
    <text evidence="1">Amino-acid biosynthesis; L-histidine biosynthesis; L-histidine from 5-phospho-alpha-D-ribose 1-diphosphate: step 6/9.</text>
</comment>
<comment type="subcellular location">
    <subcellularLocation>
        <location evidence="1">Cytoplasm</location>
    </subcellularLocation>
</comment>
<comment type="similarity">
    <text evidence="1">Belongs to the imidazoleglycerol-phosphate dehydratase family.</text>
</comment>
<accession>A3Q129</accession>
<evidence type="ECO:0000255" key="1">
    <source>
        <dbReference type="HAMAP-Rule" id="MF_00076"/>
    </source>
</evidence>
<organism>
    <name type="scientific">Mycobacterium sp. (strain JLS)</name>
    <dbReference type="NCBI Taxonomy" id="164757"/>
    <lineage>
        <taxon>Bacteria</taxon>
        <taxon>Bacillati</taxon>
        <taxon>Actinomycetota</taxon>
        <taxon>Actinomycetes</taxon>
        <taxon>Mycobacteriales</taxon>
        <taxon>Mycobacteriaceae</taxon>
        <taxon>Mycobacterium</taxon>
    </lineage>
</organism>
<protein>
    <recommendedName>
        <fullName evidence="1">Imidazoleglycerol-phosphate dehydratase</fullName>
        <shortName evidence="1">IGPD</shortName>
        <ecNumber evidence="1">4.2.1.19</ecNumber>
    </recommendedName>
</protein>
<sequence>MTDMLTGTRRARVERKTKESDIVVDLDLDGTGIVDIRTGVPFFDHMLTSLGSHASFDLTVHATGDIEIEGHHTVEDTAIVLGQALGQALGDKKGIRRFGDAFIPMDETLAHAAVDVSGRPYFVHTGEPDYMVEFTIAGSSAPYHTVINRHVFESLAFNARIALHVRTIYGRDPHHITEAQYKAVARALRQAVELDPRVTGVPSTKGSL</sequence>
<gene>
    <name evidence="1" type="primary">hisB</name>
    <name type="ordered locus">Mjls_3077</name>
</gene>
<reference key="1">
    <citation type="submission" date="2007-02" db="EMBL/GenBank/DDBJ databases">
        <title>Complete sequence of Mycobacterium sp. JLS.</title>
        <authorList>
            <consortium name="US DOE Joint Genome Institute"/>
            <person name="Copeland A."/>
            <person name="Lucas S."/>
            <person name="Lapidus A."/>
            <person name="Barry K."/>
            <person name="Detter J.C."/>
            <person name="Glavina del Rio T."/>
            <person name="Hammon N."/>
            <person name="Israni S."/>
            <person name="Dalin E."/>
            <person name="Tice H."/>
            <person name="Pitluck S."/>
            <person name="Chain P."/>
            <person name="Malfatti S."/>
            <person name="Shin M."/>
            <person name="Vergez L."/>
            <person name="Schmutz J."/>
            <person name="Larimer F."/>
            <person name="Land M."/>
            <person name="Hauser L."/>
            <person name="Kyrpides N."/>
            <person name="Mikhailova N."/>
            <person name="Miller C.D."/>
            <person name="Anderson A.J."/>
            <person name="Sims R.C."/>
            <person name="Richardson P."/>
        </authorList>
    </citation>
    <scope>NUCLEOTIDE SEQUENCE [LARGE SCALE GENOMIC DNA]</scope>
    <source>
        <strain>JLS</strain>
    </source>
</reference>
<keyword id="KW-0028">Amino-acid biosynthesis</keyword>
<keyword id="KW-0963">Cytoplasm</keyword>
<keyword id="KW-0368">Histidine biosynthesis</keyword>
<keyword id="KW-0456">Lyase</keyword>